<organism>
    <name type="scientific">Streptococcus pyogenes serotype M5 (strain Manfredo)</name>
    <dbReference type="NCBI Taxonomy" id="160491"/>
    <lineage>
        <taxon>Bacteria</taxon>
        <taxon>Bacillati</taxon>
        <taxon>Bacillota</taxon>
        <taxon>Bacilli</taxon>
        <taxon>Lactobacillales</taxon>
        <taxon>Streptococcaceae</taxon>
        <taxon>Streptococcus</taxon>
    </lineage>
</organism>
<name>MRAY_STRPG</name>
<accession>A2RD43</accession>
<reference key="1">
    <citation type="journal article" date="2007" name="J. Bacteriol.">
        <title>Complete genome of acute rheumatic fever-associated serotype M5 Streptococcus pyogenes strain Manfredo.</title>
        <authorList>
            <person name="Holden M.T.G."/>
            <person name="Scott A."/>
            <person name="Cherevach I."/>
            <person name="Chillingworth T."/>
            <person name="Churcher C."/>
            <person name="Cronin A."/>
            <person name="Dowd L."/>
            <person name="Feltwell T."/>
            <person name="Hamlin N."/>
            <person name="Holroyd S."/>
            <person name="Jagels K."/>
            <person name="Moule S."/>
            <person name="Mungall K."/>
            <person name="Quail M.A."/>
            <person name="Price C."/>
            <person name="Rabbinowitsch E."/>
            <person name="Sharp S."/>
            <person name="Skelton J."/>
            <person name="Whitehead S."/>
            <person name="Barrell B.G."/>
            <person name="Kehoe M."/>
            <person name="Parkhill J."/>
        </authorList>
    </citation>
    <scope>NUCLEOTIDE SEQUENCE [LARGE SCALE GENOMIC DNA]</scope>
    <source>
        <strain>Manfredo</strain>
    </source>
</reference>
<feature type="chain" id="PRO_1000003077" description="Phospho-N-acetylmuramoyl-pentapeptide-transferase">
    <location>
        <begin position="1"/>
        <end position="336"/>
    </location>
</feature>
<feature type="transmembrane region" description="Helical" evidence="1">
    <location>
        <begin position="3"/>
        <end position="23"/>
    </location>
</feature>
<feature type="transmembrane region" description="Helical" evidence="1">
    <location>
        <begin position="53"/>
        <end position="73"/>
    </location>
</feature>
<feature type="transmembrane region" description="Helical" evidence="1">
    <location>
        <begin position="78"/>
        <end position="98"/>
    </location>
</feature>
<feature type="transmembrane region" description="Helical" evidence="1">
    <location>
        <begin position="118"/>
        <end position="138"/>
    </location>
</feature>
<feature type="transmembrane region" description="Helical" evidence="1">
    <location>
        <begin position="143"/>
        <end position="163"/>
    </location>
</feature>
<feature type="transmembrane region" description="Helical" evidence="1">
    <location>
        <begin position="174"/>
        <end position="194"/>
    </location>
</feature>
<feature type="transmembrane region" description="Helical" evidence="1">
    <location>
        <begin position="200"/>
        <end position="220"/>
    </location>
</feature>
<feature type="transmembrane region" description="Helical" evidence="1">
    <location>
        <begin position="226"/>
        <end position="246"/>
    </location>
</feature>
<feature type="transmembrane region" description="Helical" evidence="1">
    <location>
        <begin position="251"/>
        <end position="271"/>
    </location>
</feature>
<feature type="transmembrane region" description="Helical" evidence="1">
    <location>
        <begin position="316"/>
        <end position="336"/>
    </location>
</feature>
<protein>
    <recommendedName>
        <fullName evidence="1">Phospho-N-acetylmuramoyl-pentapeptide-transferase</fullName>
        <ecNumber evidence="1">2.7.8.13</ecNumber>
    </recommendedName>
    <alternativeName>
        <fullName evidence="1">UDP-MurNAc-pentapeptide phosphotransferase</fullName>
    </alternativeName>
</protein>
<gene>
    <name evidence="1" type="primary">mraY</name>
    <name type="ordered locus">SpyM50426</name>
</gene>
<sequence>MFLTLIAAIISFMVSAFTMPYFIKFYQLKKIGGQQMHEDVKQHLAKAGTPTMGGTVFLLVATAVSLLVNLFSIKNTQSLALISGILSIVVIYGIIGFLDDFLKIFKQINEGLTAKQKLALQLAGGLMFYFLHVSPSGISSINVFGYQLSLGIFYLFFVLFWVVGFSNAVNLTDGIDGLASISVVISLVTYGVIAYVQGQFDVLLLIGTMIGALLGFFCFNHKPAKVFMGDVGSLALGAMLAAISIALRQEWTLLIIGIVYVLETSSVMLQVSYFKYTKKKYGEGRRIFRMTPFHHHLELGGLSGKGKKWSEWQVDAFLWGVGSLASLLVLAILYVF</sequence>
<comment type="function">
    <text evidence="1">Catalyzes the initial step of the lipid cycle reactions in the biosynthesis of the cell wall peptidoglycan: transfers peptidoglycan precursor phospho-MurNAc-pentapeptide from UDP-MurNAc-pentapeptide onto the lipid carrier undecaprenyl phosphate, yielding undecaprenyl-pyrophosphoryl-MurNAc-pentapeptide, known as lipid I.</text>
</comment>
<comment type="catalytic activity">
    <reaction evidence="1">
        <text>UDP-N-acetyl-alpha-D-muramoyl-L-alanyl-gamma-D-glutamyl-L-lysyl-D-alanyl-D-alanine + di-trans,octa-cis-undecaprenyl phosphate = Mur2Ac(oyl-L-Ala-gamma-D-Glu-L-Lys-D-Ala-D-Ala)-di-trans,octa-cis-undecaprenyl diphosphate + UMP</text>
        <dbReference type="Rhea" id="RHEA:21920"/>
        <dbReference type="ChEBI" id="CHEBI:57865"/>
        <dbReference type="ChEBI" id="CHEBI:60032"/>
        <dbReference type="ChEBI" id="CHEBI:60392"/>
        <dbReference type="ChEBI" id="CHEBI:70758"/>
        <dbReference type="EC" id="2.7.8.13"/>
    </reaction>
</comment>
<comment type="cofactor">
    <cofactor evidence="1">
        <name>Mg(2+)</name>
        <dbReference type="ChEBI" id="CHEBI:18420"/>
    </cofactor>
</comment>
<comment type="pathway">
    <text evidence="1">Cell wall biogenesis; peptidoglycan biosynthesis.</text>
</comment>
<comment type="subcellular location">
    <subcellularLocation>
        <location evidence="1">Cell membrane</location>
        <topology evidence="1">Multi-pass membrane protein</topology>
    </subcellularLocation>
</comment>
<comment type="similarity">
    <text evidence="1">Belongs to the glycosyltransferase 4 family. MraY subfamily.</text>
</comment>
<keyword id="KW-0131">Cell cycle</keyword>
<keyword id="KW-0132">Cell division</keyword>
<keyword id="KW-1003">Cell membrane</keyword>
<keyword id="KW-0133">Cell shape</keyword>
<keyword id="KW-0961">Cell wall biogenesis/degradation</keyword>
<keyword id="KW-0460">Magnesium</keyword>
<keyword id="KW-0472">Membrane</keyword>
<keyword id="KW-0479">Metal-binding</keyword>
<keyword id="KW-0573">Peptidoglycan synthesis</keyword>
<keyword id="KW-0808">Transferase</keyword>
<keyword id="KW-0812">Transmembrane</keyword>
<keyword id="KW-1133">Transmembrane helix</keyword>
<proteinExistence type="inferred from homology"/>
<evidence type="ECO:0000255" key="1">
    <source>
        <dbReference type="HAMAP-Rule" id="MF_00038"/>
    </source>
</evidence>
<dbReference type="EC" id="2.7.8.13" evidence="1"/>
<dbReference type="EMBL" id="AM295007">
    <property type="protein sequence ID" value="CAM29768.1"/>
    <property type="molecule type" value="Genomic_DNA"/>
</dbReference>
<dbReference type="RefSeq" id="WP_011888657.1">
    <property type="nucleotide sequence ID" value="NC_009332.1"/>
</dbReference>
<dbReference type="SMR" id="A2RD43"/>
<dbReference type="KEGG" id="spf:SpyM50426"/>
<dbReference type="HOGENOM" id="CLU_023982_0_1_9"/>
<dbReference type="UniPathway" id="UPA00219"/>
<dbReference type="GO" id="GO:0005886">
    <property type="term" value="C:plasma membrane"/>
    <property type="evidence" value="ECO:0007669"/>
    <property type="project" value="UniProtKB-SubCell"/>
</dbReference>
<dbReference type="GO" id="GO:0046872">
    <property type="term" value="F:metal ion binding"/>
    <property type="evidence" value="ECO:0007669"/>
    <property type="project" value="UniProtKB-KW"/>
</dbReference>
<dbReference type="GO" id="GO:0008963">
    <property type="term" value="F:phospho-N-acetylmuramoyl-pentapeptide-transferase activity"/>
    <property type="evidence" value="ECO:0007669"/>
    <property type="project" value="UniProtKB-UniRule"/>
</dbReference>
<dbReference type="GO" id="GO:0051301">
    <property type="term" value="P:cell division"/>
    <property type="evidence" value="ECO:0007669"/>
    <property type="project" value="UniProtKB-KW"/>
</dbReference>
<dbReference type="GO" id="GO:0071555">
    <property type="term" value="P:cell wall organization"/>
    <property type="evidence" value="ECO:0007669"/>
    <property type="project" value="UniProtKB-KW"/>
</dbReference>
<dbReference type="GO" id="GO:0009252">
    <property type="term" value="P:peptidoglycan biosynthetic process"/>
    <property type="evidence" value="ECO:0007669"/>
    <property type="project" value="UniProtKB-UniRule"/>
</dbReference>
<dbReference type="GO" id="GO:0008360">
    <property type="term" value="P:regulation of cell shape"/>
    <property type="evidence" value="ECO:0007669"/>
    <property type="project" value="UniProtKB-KW"/>
</dbReference>
<dbReference type="CDD" id="cd06852">
    <property type="entry name" value="GT_MraY"/>
    <property type="match status" value="1"/>
</dbReference>
<dbReference type="HAMAP" id="MF_00038">
    <property type="entry name" value="MraY"/>
    <property type="match status" value="1"/>
</dbReference>
<dbReference type="InterPro" id="IPR000715">
    <property type="entry name" value="Glycosyl_transferase_4"/>
</dbReference>
<dbReference type="InterPro" id="IPR003524">
    <property type="entry name" value="PNAcMuramoyl-5peptid_Trfase"/>
</dbReference>
<dbReference type="InterPro" id="IPR018480">
    <property type="entry name" value="PNAcMuramoyl-5peptid_Trfase_CS"/>
</dbReference>
<dbReference type="NCBIfam" id="TIGR00445">
    <property type="entry name" value="mraY"/>
    <property type="match status" value="1"/>
</dbReference>
<dbReference type="PANTHER" id="PTHR22926">
    <property type="entry name" value="PHOSPHO-N-ACETYLMURAMOYL-PENTAPEPTIDE-TRANSFERASE"/>
    <property type="match status" value="1"/>
</dbReference>
<dbReference type="PANTHER" id="PTHR22926:SF5">
    <property type="entry name" value="PHOSPHO-N-ACETYLMURAMOYL-PENTAPEPTIDE-TRANSFERASE HOMOLOG"/>
    <property type="match status" value="1"/>
</dbReference>
<dbReference type="Pfam" id="PF00953">
    <property type="entry name" value="Glycos_transf_4"/>
    <property type="match status" value="1"/>
</dbReference>
<dbReference type="Pfam" id="PF10555">
    <property type="entry name" value="MraY_sig1"/>
    <property type="match status" value="1"/>
</dbReference>
<dbReference type="PROSITE" id="PS01348">
    <property type="entry name" value="MRAY_2"/>
    <property type="match status" value="1"/>
</dbReference>